<dbReference type="EMBL" id="AF280398">
    <property type="protein sequence ID" value="AAG49893.1"/>
    <property type="molecule type" value="mRNA"/>
</dbReference>
<dbReference type="RefSeq" id="NP_776991.1">
    <property type="nucleotide sequence ID" value="NM_174566.1"/>
</dbReference>
<dbReference type="SMR" id="Q9BGI7"/>
<dbReference type="FunCoup" id="Q9BGI7">
    <property type="interactions" value="151"/>
</dbReference>
<dbReference type="STRING" id="9913.ENSBTAP00000027054"/>
<dbReference type="GlyCosmos" id="Q9BGI7">
    <property type="glycosylation" value="2 sites, No reported glycans"/>
</dbReference>
<dbReference type="GlyGen" id="Q9BGI7">
    <property type="glycosylation" value="2 sites"/>
</dbReference>
<dbReference type="iPTMnet" id="Q9BGI7"/>
<dbReference type="PaxDb" id="9913-ENSBTAP00000027054"/>
<dbReference type="Ensembl" id="ENSBTAT00000027054.3">
    <property type="protein sequence ID" value="ENSBTAP00000027054.2"/>
    <property type="gene ID" value="ENSBTAG00000020299.3"/>
</dbReference>
<dbReference type="GeneID" id="282293"/>
<dbReference type="KEGG" id="bta:282293"/>
<dbReference type="CTD" id="5956"/>
<dbReference type="VEuPathDB" id="HostDB:ENSBTAG00000020299"/>
<dbReference type="eggNOG" id="KOG3656">
    <property type="taxonomic scope" value="Eukaryota"/>
</dbReference>
<dbReference type="GeneTree" id="ENSGT01030000234549"/>
<dbReference type="HOGENOM" id="CLU_009579_3_0_1"/>
<dbReference type="InParanoid" id="Q9BGI7"/>
<dbReference type="OMA" id="EWGKQSF"/>
<dbReference type="OrthoDB" id="8545112at2759"/>
<dbReference type="TreeFam" id="TF324998"/>
<dbReference type="Reactome" id="R-BTA-2187335">
    <property type="pathway name" value="The retinoid cycle in cones (daylight vision)"/>
</dbReference>
<dbReference type="Reactome" id="R-BTA-418594">
    <property type="pathway name" value="G alpha (i) signalling events"/>
</dbReference>
<dbReference type="Reactome" id="R-BTA-419771">
    <property type="pathway name" value="Opsins"/>
</dbReference>
<dbReference type="Proteomes" id="UP000009136">
    <property type="component" value="Chromosome X"/>
</dbReference>
<dbReference type="Bgee" id="ENSBTAG00000020299">
    <property type="expression patterns" value="Expressed in retina and 13 other cell types or tissues"/>
</dbReference>
<dbReference type="GO" id="GO:0001750">
    <property type="term" value="C:photoreceptor outer segment"/>
    <property type="evidence" value="ECO:0000318"/>
    <property type="project" value="GO_Central"/>
</dbReference>
<dbReference type="GO" id="GO:0005886">
    <property type="term" value="C:plasma membrane"/>
    <property type="evidence" value="ECO:0000318"/>
    <property type="project" value="GO_Central"/>
</dbReference>
<dbReference type="GO" id="GO:0008020">
    <property type="term" value="F:G protein-coupled photoreceptor activity"/>
    <property type="evidence" value="ECO:0000318"/>
    <property type="project" value="GO_Central"/>
</dbReference>
<dbReference type="GO" id="GO:0071482">
    <property type="term" value="P:cellular response to light stimulus"/>
    <property type="evidence" value="ECO:0000318"/>
    <property type="project" value="GO_Central"/>
</dbReference>
<dbReference type="GO" id="GO:0007186">
    <property type="term" value="P:G protein-coupled receptor signaling pathway"/>
    <property type="evidence" value="ECO:0000318"/>
    <property type="project" value="GO_Central"/>
</dbReference>
<dbReference type="GO" id="GO:0007602">
    <property type="term" value="P:phototransduction"/>
    <property type="evidence" value="ECO:0000318"/>
    <property type="project" value="GO_Central"/>
</dbReference>
<dbReference type="GO" id="GO:0007601">
    <property type="term" value="P:visual perception"/>
    <property type="evidence" value="ECO:0007669"/>
    <property type="project" value="UniProtKB-KW"/>
</dbReference>
<dbReference type="FunFam" id="1.20.1070.10:FF:000090">
    <property type="entry name" value="Long-wave-sensitive opsin 1"/>
    <property type="match status" value="1"/>
</dbReference>
<dbReference type="Gene3D" id="1.20.1070.10">
    <property type="entry name" value="Rhodopsin 7-helix transmembrane proteins"/>
    <property type="match status" value="1"/>
</dbReference>
<dbReference type="InterPro" id="IPR050125">
    <property type="entry name" value="GPCR_opsins"/>
</dbReference>
<dbReference type="InterPro" id="IPR000276">
    <property type="entry name" value="GPCR_Rhodpsn"/>
</dbReference>
<dbReference type="InterPro" id="IPR017452">
    <property type="entry name" value="GPCR_Rhodpsn_7TM"/>
</dbReference>
<dbReference type="InterPro" id="IPR001760">
    <property type="entry name" value="Opsin"/>
</dbReference>
<dbReference type="InterPro" id="IPR000378">
    <property type="entry name" value="Opsin_red/grn"/>
</dbReference>
<dbReference type="InterPro" id="IPR027430">
    <property type="entry name" value="Retinal_BS"/>
</dbReference>
<dbReference type="PANTHER" id="PTHR24240">
    <property type="entry name" value="OPSIN"/>
    <property type="match status" value="1"/>
</dbReference>
<dbReference type="Pfam" id="PF00001">
    <property type="entry name" value="7tm_1"/>
    <property type="match status" value="1"/>
</dbReference>
<dbReference type="PRINTS" id="PR00237">
    <property type="entry name" value="GPCRRHODOPSN"/>
</dbReference>
<dbReference type="PRINTS" id="PR00238">
    <property type="entry name" value="OPSIN"/>
</dbReference>
<dbReference type="PRINTS" id="PR00575">
    <property type="entry name" value="OPSINREDGRN"/>
</dbReference>
<dbReference type="SMART" id="SM01381">
    <property type="entry name" value="7TM_GPCR_Srsx"/>
    <property type="match status" value="1"/>
</dbReference>
<dbReference type="SUPFAM" id="SSF81321">
    <property type="entry name" value="Family A G protein-coupled receptor-like"/>
    <property type="match status" value="1"/>
</dbReference>
<dbReference type="PROSITE" id="PS00237">
    <property type="entry name" value="G_PROTEIN_RECEP_F1_1"/>
    <property type="match status" value="1"/>
</dbReference>
<dbReference type="PROSITE" id="PS50262">
    <property type="entry name" value="G_PROTEIN_RECEP_F1_2"/>
    <property type="match status" value="1"/>
</dbReference>
<dbReference type="PROSITE" id="PS00238">
    <property type="entry name" value="OPSIN"/>
    <property type="match status" value="1"/>
</dbReference>
<sequence>MAHAWGPQRLAGGQPQANFEESTQGSIFTYTNSNSTRDPFEGPNYHIAPRWVYHLTSAWMVFVVIASVFTNGLVLAATMRFKKLRHPLNWILVNLAIADLAETIIASTISVVNQMYGYFVLGHPLCVVEGYTVSLCGITGLWSLAIISWERWMVVCKPFGNVRFDAKLAITGIAFSWIWAAVWTAPPIFGWSRYWPHGLKTSCGPDVFSGSSYPGVQSYMIVLMITCCFIPLSVIILCYLQVWLAIRAVAKQQKESESTQKAEKEVTRMVMVMIFAYCLCWGPYTFFACFAAAHPGYAFHPLVAALPAYFAKSATIYNPIIYVFMNRQFRNCILQLFGKKVDDSSELSSVSKTEASSVSSVSPA</sequence>
<evidence type="ECO:0000250" key="1"/>
<evidence type="ECO:0000255" key="2"/>
<evidence type="ECO:0000255" key="3">
    <source>
        <dbReference type="PROSITE-ProRule" id="PRU00521"/>
    </source>
</evidence>
<evidence type="ECO:0000269" key="4">
    <source>
    </source>
</evidence>
<organism>
    <name type="scientific">Bos taurus</name>
    <name type="common">Bovine</name>
    <dbReference type="NCBI Taxonomy" id="9913"/>
    <lineage>
        <taxon>Eukaryota</taxon>
        <taxon>Metazoa</taxon>
        <taxon>Chordata</taxon>
        <taxon>Craniata</taxon>
        <taxon>Vertebrata</taxon>
        <taxon>Euteleostomi</taxon>
        <taxon>Mammalia</taxon>
        <taxon>Eutheria</taxon>
        <taxon>Laurasiatheria</taxon>
        <taxon>Artiodactyla</taxon>
        <taxon>Ruminantia</taxon>
        <taxon>Pecora</taxon>
        <taxon>Bovidae</taxon>
        <taxon>Bovinae</taxon>
        <taxon>Bos</taxon>
    </lineage>
</organism>
<reference key="1">
    <citation type="submission" date="2000-06" db="EMBL/GenBank/DDBJ databases">
        <title>Cloning of the red visual pigment gene of Bos taurus.</title>
        <authorList>
            <person name="Fauser S."/>
            <person name="Luberichs J.F."/>
            <person name="Ferreira P.A."/>
        </authorList>
    </citation>
    <scope>NUCLEOTIDE SEQUENCE [MRNA]</scope>
</reference>
<reference key="2">
    <citation type="journal article" date="2019" name="J. Biol. Chem.">
        <title>Human red and green cone opsins are O-glycosylated at an N-terminal Ser/Thr-rich domain conserved in vertebrates.</title>
        <authorList>
            <person name="Salom D."/>
            <person name="Jin H."/>
            <person name="Gerken T.A."/>
            <person name="Yu C."/>
            <person name="Huang L."/>
            <person name="Palczewski K."/>
        </authorList>
    </citation>
    <scope>IDENTIFICATION BY MASS SPECTROMETRY</scope>
    <scope>TISSUE SPECIFICITY</scope>
    <scope>GLYCOSYLATION AT SER-22 AND ASN-34</scope>
</reference>
<proteinExistence type="evidence at protein level"/>
<gene>
    <name type="primary">OPN1LW</name>
    <name type="synonym">RCP</name>
</gene>
<accession>Q9BGI7</accession>
<keyword id="KW-0157">Chromophore</keyword>
<keyword id="KW-1015">Disulfide bond</keyword>
<keyword id="KW-0297">G-protein coupled receptor</keyword>
<keyword id="KW-0325">Glycoprotein</keyword>
<keyword id="KW-0472">Membrane</keyword>
<keyword id="KW-0597">Phosphoprotein</keyword>
<keyword id="KW-0600">Photoreceptor protein</keyword>
<keyword id="KW-0675">Receptor</keyword>
<keyword id="KW-1185">Reference proteome</keyword>
<keyword id="KW-0681">Retinal protein</keyword>
<keyword id="KW-0716">Sensory transduction</keyword>
<keyword id="KW-0807">Transducer</keyword>
<keyword id="KW-0812">Transmembrane</keyword>
<keyword id="KW-1133">Transmembrane helix</keyword>
<keyword id="KW-0844">Vision</keyword>
<comment type="function">
    <text>Visual pigments are the light-absorbing molecules that mediate vision. They consist of an apoprotein, opsin, covalently linked to cis-retinal.</text>
</comment>
<comment type="subcellular location">
    <subcellularLocation>
        <location>Membrane</location>
        <topology>Multi-pass membrane protein</topology>
    </subcellularLocation>
</comment>
<comment type="tissue specificity">
    <text evidence="4">Expressed in retina (at protein level) (PubMed:30948514). Expressed in cone and/or rod photoreceptor cells (at protein level) (PubMed:30948514).</text>
</comment>
<comment type="PTM">
    <text evidence="1">Phosphorylated on some or all of the serine and threonine residues present in the C-terminal region.</text>
</comment>
<comment type="similarity">
    <text evidence="3">Belongs to the G-protein coupled receptor 1 family. Opsin subfamily.</text>
</comment>
<feature type="chain" id="PRO_0000245019" description="Long-wave-sensitive opsin 1">
    <location>
        <begin position="1"/>
        <end position="364"/>
    </location>
</feature>
<feature type="topological domain" description="Extracellular">
    <location>
        <begin position="1"/>
        <end position="52"/>
    </location>
</feature>
<feature type="transmembrane region" description="Helical; Name=1" evidence="2">
    <location>
        <begin position="53"/>
        <end position="77"/>
    </location>
</feature>
<feature type="topological domain" description="Cytoplasmic">
    <location>
        <begin position="78"/>
        <end position="89"/>
    </location>
</feature>
<feature type="transmembrane region" description="Helical; Name=2" evidence="2">
    <location>
        <begin position="90"/>
        <end position="115"/>
    </location>
</feature>
<feature type="topological domain" description="Extracellular">
    <location>
        <begin position="116"/>
        <end position="129"/>
    </location>
</feature>
<feature type="transmembrane region" description="Helical; Name=3" evidence="2">
    <location>
        <begin position="130"/>
        <end position="149"/>
    </location>
</feature>
<feature type="topological domain" description="Cytoplasmic">
    <location>
        <begin position="150"/>
        <end position="168"/>
    </location>
</feature>
<feature type="transmembrane region" description="Helical; Name=4" evidence="2">
    <location>
        <begin position="169"/>
        <end position="192"/>
    </location>
</feature>
<feature type="topological domain" description="Extracellular">
    <location>
        <begin position="193"/>
        <end position="218"/>
    </location>
</feature>
<feature type="transmembrane region" description="Helical; Name=5" evidence="2">
    <location>
        <begin position="219"/>
        <end position="246"/>
    </location>
</feature>
<feature type="topological domain" description="Cytoplasmic">
    <location>
        <begin position="247"/>
        <end position="268"/>
    </location>
</feature>
<feature type="transmembrane region" description="Helical; Name=6" evidence="2">
    <location>
        <begin position="269"/>
        <end position="292"/>
    </location>
</feature>
<feature type="topological domain" description="Extracellular">
    <location>
        <begin position="293"/>
        <end position="300"/>
    </location>
</feature>
<feature type="transmembrane region" description="Helical; Name=7" evidence="2">
    <location>
        <begin position="301"/>
        <end position="325"/>
    </location>
</feature>
<feature type="topological domain" description="Cytoplasmic">
    <location>
        <begin position="326"/>
        <end position="364"/>
    </location>
</feature>
<feature type="modified residue" description="N6-(retinylidene)lysine" evidence="1">
    <location>
        <position position="312"/>
    </location>
</feature>
<feature type="glycosylation site" description="O-linked (GlcNAc) serine" evidence="4">
    <location>
        <position position="22"/>
    </location>
</feature>
<feature type="glycosylation site" description="N-linked (GlcNAc...) asparagine" evidence="4">
    <location>
        <position position="34"/>
    </location>
</feature>
<feature type="disulfide bond" evidence="3">
    <location>
        <begin position="126"/>
        <end position="203"/>
    </location>
</feature>
<protein>
    <recommendedName>
        <fullName>Long-wave-sensitive opsin 1</fullName>
    </recommendedName>
    <alternativeName>
        <fullName>Red cone photoreceptor pigment</fullName>
    </alternativeName>
    <alternativeName>
        <fullName>Red-sensitive opsin</fullName>
    </alternativeName>
</protein>
<name>OPSR_BOVIN</name>